<geneLocation type="plasmid" evidence="15">
    <name>pAM65-52-4-128K</name>
</geneLocation>
<geneLocation type="plasmid" evidence="12">
    <name>pBtoxis</name>
</geneLocation>
<geneLocation type="plasmid" evidence="16">
    <name>pT0124-4</name>
</geneLocation>
<organism>
    <name type="scientific">Bacillus thuringiensis subsp. israelensis</name>
    <dbReference type="NCBI Taxonomy" id="1430"/>
    <lineage>
        <taxon>Bacteria</taxon>
        <taxon>Bacillati</taxon>
        <taxon>Bacillota</taxon>
        <taxon>Bacilli</taxon>
        <taxon>Bacillales</taxon>
        <taxon>Bacillaceae</taxon>
        <taxon>Bacillus</taxon>
        <taxon>Bacillus cereus group</taxon>
    </lineage>
</organism>
<reference key="1">
    <citation type="journal article" date="2002" name="Appl. Environ. Microbiol.">
        <title>Complete sequence and organization of pBtoxis, the toxin-coding plasmid of Bacillus thuringiensis subsp. israelensis.</title>
        <authorList>
            <person name="Berry C."/>
            <person name="O'Niel S."/>
            <person name="Ben-Dov E."/>
            <person name="Jones A.F."/>
            <person name="Murphy L."/>
            <person name="Quail M.A."/>
            <person name="Harris D."/>
            <person name="Zaritsky A."/>
            <person name="Parkhill J."/>
        </authorList>
    </citation>
    <scope>NUCLEOTIDE SEQUENCE [GENOMIC DNA]</scope>
    <source>
        <strain>4Q2-72 / 4Q5</strain>
        <plasmid>pBtoxis</plasmid>
    </source>
</reference>
<reference key="2">
    <citation type="journal article" date="2017" name="Res. Microbiol.">
        <title>Comparative genomics of extrachromosomal elements in Bacillus thuringiensis subsp. israelensis.</title>
        <authorList>
            <person name="Bolotin A."/>
            <person name="Gillis A."/>
            <person name="Sanchis V."/>
            <person name="Nielsen-LeRoux C."/>
            <person name="Mahillon J."/>
            <person name="Lereclus D."/>
            <person name="Sorokin A."/>
        </authorList>
    </citation>
    <scope>NUCLEOTIDE SEQUENCE [GENOMIC DNA]</scope>
    <source>
        <strain>AM65-52</strain>
        <plasmid>pAM65-52-4-128K</plasmid>
    </source>
</reference>
<reference key="3">
    <citation type="submission" date="2016-12" db="EMBL/GenBank/DDBJ databases">
        <title>Bacillus turingiensis from Tocantins.</title>
        <authorList>
            <person name="Alves G.B."/>
            <person name="Melo F.L."/>
            <person name="Campos F.S."/>
            <person name="Correa R.F.T."/>
            <person name="Ribeiro B.M."/>
            <person name="Aguiar R.W.S."/>
        </authorList>
    </citation>
    <scope>NUCLEOTIDE SEQUENCE [GENOMIC DNA]</scope>
    <source>
        <strain>1.24</strain>
        <plasmid>pT0124-4</plasmid>
    </source>
</reference>
<reference key="4">
    <citation type="journal article" date="2006" name="Appl. Environ. Microbiol.">
        <title>Minireplicon from pBtoxis of Bacillus thuringiensis subsp. israelensis.</title>
        <authorList>
            <person name="Tang M."/>
            <person name="Bideshi D.K."/>
            <person name="Park H.W."/>
            <person name="Federici B.A."/>
        </authorList>
    </citation>
    <scope>FUNCTION</scope>
    <scope>PROBABLE OPERON</scope>
    <scope>DISRUPTION PHENOTYPE</scope>
    <scope>BIOTECHNOLOGY</scope>
    <source>
        <strain>4Q5</strain>
        <plasmid>pBtoxis</plasmid>
    </source>
</reference>
<reference key="5">
    <citation type="journal article" date="2007" name="Genes Dev.">
        <title>Treadmilling of a prokaryotic tubulin-like protein, TubZ, required for plasmid stability in Bacillus thuringiensis.</title>
        <authorList>
            <person name="Larsen R.A."/>
            <person name="Cusumano C."/>
            <person name="Fujioka A."/>
            <person name="Lim-Fong G."/>
            <person name="Patterson P."/>
            <person name="Pogliano J."/>
        </authorList>
    </citation>
    <scope>SUBUNIT</scope>
    <scope>FILAMENT FORMATION</scope>
    <scope>SUBCELLULAR LOCATION</scope>
    <scope>PROBABLE OPERON</scope>
    <scope>MUTAGENESIS OF ASP-269</scope>
    <source>
        <strain>ATCC 35646 / USDA HD522</strain>
        <plasmid>pBtoxis</plasmid>
    </source>
</reference>
<reference key="6">
    <citation type="journal article" date="2007" name="J. Bacteriol.">
        <title>Iteron-binding ORF157 and FtsZ-like ORF156 proteins encoded by pBtoxis play a role in its replication in Bacillus thuringiensis subsp. israelensis.</title>
        <authorList>
            <person name="Tang M."/>
            <person name="Bideshi D.K."/>
            <person name="Park H.W."/>
            <person name="Federici B.A."/>
        </authorList>
    </citation>
    <scope>FUNCTION</scope>
    <scope>CATALYTIC ACTIVITY</scope>
    <scope>INTERACTION WITH TUBR</scope>
    <scope>SUBUNIT</scope>
    <scope>DISRUPTION PHENOTYPE</scope>
    <source>
        <strain>4Q5</strain>
        <plasmid>pBtoxis</plasmid>
    </source>
</reference>
<reference key="7">
    <citation type="journal article" date="2008" name="J. Biol. Chem.">
        <title>In vitro assembly studies of FtsZ/tubulin-like proteins (TubZ) from Bacillus plasmids: evidence for a capping mechanism.</title>
        <authorList>
            <person name="Chen Y."/>
            <person name="Erickson H.P."/>
        </authorList>
    </citation>
    <scope>CATALYTIC ACTIVITY</scope>
    <scope>ACTIVITY REGULATION</scope>
    <scope>FILAMENT FORMATION</scope>
    <scope>SUBUNIT</scope>
    <source>
        <strain>Mosquito Dunks</strain>
        <plasmid>pBtoxis</plasmid>
    </source>
</reference>
<reference key="8">
    <citation type="journal article" date="2012" name="Proc. Natl. Acad. Sci. U.S.A.">
        <title>Superstructure of the centromeric complex of TubZRC plasmid partitioning systems.</title>
        <authorList>
            <person name="Aylett C.H."/>
            <person name="Lowe J."/>
        </authorList>
    </citation>
    <scope>FILAMENT STABILITY</scope>
    <source>
        <strain>ATCC 35646 / USDA HD522</strain>
        <plasmid>pBtoxis</plasmid>
    </source>
</reference>
<reference key="9">
    <citation type="journal article" date="2015" name="Proc. Natl. Acad. Sci. U.S.A.">
        <title>Reconstitution of a prokaryotic minus end-tracking system using TubRC centromeric complexes and tubulin-like protein TubZ filaments.</title>
        <authorList>
            <person name="Fink G."/>
            <person name="Loewe J."/>
        </authorList>
    </citation>
    <scope>FUNCTION</scope>
    <scope>SUBUNIT</scope>
    <source>
        <plasmid>pBtoxis</plasmid>
    </source>
</reference>
<reference evidence="25 26" key="10">
    <citation type="journal article" date="2010" name="Proc. Natl. Acad. Sci. U.S.A.">
        <title>Plasmid protein TubR uses a distinct mode of HTH-DNA binding and recruits the prokaryotic tubulin homolog TubZ to effect DNA partition.</title>
        <authorList>
            <person name="Ni L."/>
            <person name="Xu W."/>
            <person name="Kumaraswami M."/>
            <person name="Schumacher M.A."/>
        </authorList>
    </citation>
    <scope>X-RAY CRYSTALLOGRAPHY (2.00 ANGSTROMS) OF 1-407 IN COMPLEX WITH GTP</scope>
    <scope>X-RAY CRYSTALLOGRAPHY (2.30 ANGSTROMS) OF 1-428</scope>
    <scope>FUNCTION</scope>
    <scope>SUBUNIT</scope>
    <scope>DOMAIN</scope>
    <scope>MUTAGENESIS OF 408-ARG--ARG-484</scope>
    <source>
        <plasmid>pBtoxis</plasmid>
    </source>
</reference>
<reference evidence="21 22" key="11">
    <citation type="journal article" date="2010" name="Proc. Natl. Acad. Sci. U.S.A.">
        <title>Filament structure of bacterial tubulin homologue TubZ.</title>
        <authorList>
            <person name="Aylett C.H."/>
            <person name="Wang Q."/>
            <person name="Michie K.A."/>
            <person name="Amos L.A."/>
            <person name="Lowe J."/>
        </authorList>
    </citation>
    <scope>X-RAY CRYSTALLOGRAPHY (3.00 ANGSTROMS) OF 1-421 IN COMPLEX WITH GDP AND GTP-GAMMA-S</scope>
    <scope>COFACTOR</scope>
    <scope>SUBUNIT</scope>
    <scope>DOMAIN</scope>
    <source>
        <strain>ATCC 35646 / USDA HD522</strain>
        <plasmid>pBtoxis</plasmid>
    </source>
</reference>
<reference evidence="23 24" key="12">
    <citation type="journal article" date="2014" name="Proc. Natl. Acad. Sci. U.S.A.">
        <title>Bacterial tubulin TubZ-Bt transitions between a two-stranded intermediate and a four-stranded filament upon GTP hydrolysis.</title>
        <authorList>
            <person name="Montabana E.A."/>
            <person name="Agard D.A."/>
        </authorList>
    </citation>
    <scope>STRUCTURE BY ELECTRON MICROSCOPY (6.80 ANGSTROMS)</scope>
    <scope>FILAMENT FORMATION</scope>
    <scope>DOMAIN</scope>
    <scope>MUTAGENESIS OF 224-LYS--LYS-230; ASP-269 AND 471-ILE--ARG-484</scope>
    <source>
        <strain>ATCC 35646 / USDA HD522</strain>
        <plasmid>pBtoxis</plasmid>
    </source>
</reference>
<gene>
    <name evidence="13" type="primary">tubZ</name>
    <name type="ORF">ATN07_33550</name>
    <name type="ORF">pBt156</name>
</gene>
<sequence>MLLNSNELEHIHSTNHSVNDISIRWGVIGAGQKGNKEADLFAGYKFSNGTTCYPTLAVNFAESDMMHLQNIIKEDRIHFDGLKGAARTPSVVTDLFDPETNPNANGYLDKLAQELGRKFTNEEGEVIVDQFLICLGAGGGVGTGWGSLVLQLIREQFFPCPVSMLISLPSGDPDEINNALVLLSEIDEFMREQDRLFGNSDIKPLANVIVNDNTQMQRIIESQKGTKDLKNRYVNWKEVANDNVVSTLHEINIIPENYGSDNVTYDPSDLIKLLSIPGRFLTIGKARIAKFDLHSLENSIKRSLDEGFFSAEHQFETATMYGGFVLRPSNADFFKDVNTENRIRNTLGEYKRLDEIAGKFGDPIWDNEYAVCYTIFAGMTMPKRYISLAREGKELAEKQEQLRAEAQRKQDEEKVDISFATNRVQKNTFNPYNKNQGFGGASRFSGGKNSAFKRQTSEATSTQNQQEEENIISTLKTSNPFKKR</sequence>
<accession>Q8KNP3</accession>
<keyword id="KW-0002">3D-structure</keyword>
<keyword id="KW-0963">Cytoplasm</keyword>
<keyword id="KW-0342">GTP-binding</keyword>
<keyword id="KW-0378">Hydrolase</keyword>
<keyword id="KW-0460">Magnesium</keyword>
<keyword id="KW-0479">Metal-binding</keyword>
<keyword id="KW-0547">Nucleotide-binding</keyword>
<keyword id="KW-0614">Plasmid</keyword>
<keyword id="KW-0616">Plasmid partition</keyword>
<comment type="function">
    <text evidence="3 5 6 7 9 11">A tubulin-like, filament forming GTPase; the motor component of the type III plasmid partition system which ensures correct segregation of the pBtoxis plasmid. Filaments may seed from the centromere-like site (tubC) when bound by DNA-binding protein TubR; the tubC-TubR complex stabilizes the TubZ filament. Filaments grow at the plus end and depolymerize at the minus end, a process called treadmilling. TubR-tubC complexes track the depolymerizing minus end of the filament, probably pulling plasmid within the cell (PubMed:20534443, PubMed:23010931, PubMed:25825718). Required for pBtoxis plasmid replication/partition (PubMed:16936050, PubMed:17873046). Binds the TubR-tubC complex; GTP is not required for binding to TubR-tubC. TubZ alone does not bind DNA (PubMed:17873046, PubMed:20534443, PubMed:25825718). Has a high GTPase activity in the presence of Mg(2+); in the presence of GTP assembles into dynamic filaments which upon polymerization bind almost exclusively GDP. Filament formation is cooperative, requiring a critical concentration. Formation occurs very quickly and is followed by disassembly as GTP is consumed (PubMed:18198178).</text>
</comment>
<comment type="catalytic activity">
    <reaction evidence="5 6">
        <text>GTP + H2O = GDP + phosphate + H(+)</text>
        <dbReference type="Rhea" id="RHEA:19669"/>
        <dbReference type="ChEBI" id="CHEBI:15377"/>
        <dbReference type="ChEBI" id="CHEBI:15378"/>
        <dbReference type="ChEBI" id="CHEBI:37565"/>
        <dbReference type="ChEBI" id="CHEBI:43474"/>
        <dbReference type="ChEBI" id="CHEBI:58189"/>
    </reaction>
</comment>
<comment type="cofactor">
    <cofactor evidence="8 22">
        <name>Mg(2+)</name>
        <dbReference type="ChEBI" id="CHEBI:18420"/>
    </cofactor>
    <text evidence="8 21 22">In the GTP-gamma-S-bound filament structure all subunits bind Mg(2+), in the GDP-bound filament less than half the subunits bind Mg(2+).</text>
</comment>
<comment type="activity regulation">
    <text evidence="6">GTPase is inhibited by GTP-gamma-S, which also stabilizes filaments.</text>
</comment>
<comment type="subunit">
    <text evidence="4 5 6 7 8 10 11">Forms filaments; a 2-stranded filament forms with the non-hydrolyzable GTP-gamma-S which is probably a precursor to the 4-stranded filament that forms in the presence of GTP. The 4-stranded form binds GDP (PubMed:18198178, PubMed:20974911, PubMed:24550513). In vivo polymerizes to form dynamic filaments that often extend from one cell pole to the other, moving in a unidirectional manner. Filaments polymerize at the plus end and depolymerize at the minus end, a process called treadmilling. Polymerization only occurs above a critical concentration, it does not require upstream tubR (PubMed:17510284, PubMed:25825718). The tubC DNA-TubR complex binds to TubZ (PubMed:17873046, PubMed:20534443).</text>
</comment>
<comment type="interaction">
    <interactant intactId="EBI-15857919">
        <id>Q8KNP3</id>
    </interactant>
    <interactant intactId="EBI-15857919">
        <id>Q8KNP3</id>
        <label>tubZ</label>
    </interactant>
    <organismsDiffer>false</organismsDiffer>
    <experiments>3</experiments>
</comment>
<comment type="subcellular location">
    <subcellularLocation>
        <location evidence="4">Cytoplasm</location>
    </subcellularLocation>
    <text evidence="4 6 8">Forms long, dynamic filaments.</text>
</comment>
<comment type="induction">
    <text evidence="18 19">Probably part of the tubR-tubZ operon.</text>
</comment>
<comment type="domain">
    <text evidence="1 7 8 10">Consists of two domains: a nucleotide-binding N-terminus that hydrolyzes GTP and a C-terminus domain necessary for polymerization. The domains are bridged by a long, central helix (PubMed:20534443, PubMed:20974911, PubMed:24550513). The C-terminus is required for binding to the TubR-iteron DNA complex; its gradual deletion leads to decreasing binding to TubR-DNA (PubMed:20534443). Interactions between the C-terminus and the following monomer drive polymerization (By similarity). The C-terminus is required for filament formation (PubMed:24550513). In the absence of GTP's gamma phosphate the intersubunit interface is weakened, linking GTP hydrolysis to treadmilling (PubMed:20974911).</text>
</comment>
<comment type="disruption phenotype">
    <text evidence="3 5">Loss of plasmid replication.</text>
</comment>
<comment type="biotechnology">
    <text evidence="3">A miniplasmid containing this and upstream gene tubR is able to replicate in B.thuringiensis subsp. israelensis and express insect toxin proteins. The miniplasmid could be used to make plasmids for insect toxin overexpression.</text>
</comment>
<comment type="miscellaneous">
    <text evidence="10">N-terminally tagged protein does not form filaments, C-terminally tagged protein does so, but not as well as untagged protein.</text>
</comment>
<comment type="miscellaneous">
    <text evidence="17">The pBtoxis plasmid encodes all the major endotoxin proteins (Cyt1Aa, Cry4Aa, Cry4Ba, and Cry11Aa) responsible for the mosquito larvicidal activity of strain 4Q2.</text>
</comment>
<comment type="similarity">
    <text evidence="20">Belongs to the FtsZ family. TubZ subfamily.</text>
</comment>
<protein>
    <recommendedName>
        <fullName evidence="13">Tubulin-like protein TubZ</fullName>
        <ecNumber evidence="5 6">3.6.5.-</ecNumber>
    </recommendedName>
    <alternativeName>
        <fullName evidence="14">FtsZ-like protein TubZ-Bt</fullName>
    </alternativeName>
</protein>
<evidence type="ECO:0000250" key="1">
    <source>
        <dbReference type="UniProtKB" id="B3FK34"/>
    </source>
</evidence>
<evidence type="ECO:0000256" key="2">
    <source>
        <dbReference type="SAM" id="MobiDB-lite"/>
    </source>
</evidence>
<evidence type="ECO:0000269" key="3">
    <source>
    </source>
</evidence>
<evidence type="ECO:0000269" key="4">
    <source>
    </source>
</evidence>
<evidence type="ECO:0000269" key="5">
    <source>
    </source>
</evidence>
<evidence type="ECO:0000269" key="6">
    <source>
    </source>
</evidence>
<evidence type="ECO:0000269" key="7">
    <source>
    </source>
</evidence>
<evidence type="ECO:0000269" key="8">
    <source>
    </source>
</evidence>
<evidence type="ECO:0000269" key="9">
    <source>
    </source>
</evidence>
<evidence type="ECO:0000269" key="10">
    <source>
    </source>
</evidence>
<evidence type="ECO:0000269" key="11">
    <source>
    </source>
</evidence>
<evidence type="ECO:0000303" key="12">
    <source>
    </source>
</evidence>
<evidence type="ECO:0000303" key="13">
    <source>
    </source>
</evidence>
<evidence type="ECO:0000303" key="14">
    <source>
    </source>
</evidence>
<evidence type="ECO:0000303" key="15">
    <source>
    </source>
</evidence>
<evidence type="ECO:0000303" key="16">
    <source ref="3"/>
</evidence>
<evidence type="ECO:0000305" key="17">
    <source>
    </source>
</evidence>
<evidence type="ECO:0000305" key="18">
    <source>
    </source>
</evidence>
<evidence type="ECO:0000305" key="19">
    <source>
    </source>
</evidence>
<evidence type="ECO:0000305" key="20">
    <source>
    </source>
</evidence>
<evidence type="ECO:0007744" key="21">
    <source>
        <dbReference type="PDB" id="2XKA"/>
    </source>
</evidence>
<evidence type="ECO:0007744" key="22">
    <source>
        <dbReference type="PDB" id="2XKB"/>
    </source>
</evidence>
<evidence type="ECO:0007744" key="23">
    <source>
        <dbReference type="PDB" id="3J4S"/>
    </source>
</evidence>
<evidence type="ECO:0007744" key="24">
    <source>
        <dbReference type="PDB" id="3J4T"/>
    </source>
</evidence>
<evidence type="ECO:0007744" key="25">
    <source>
        <dbReference type="PDB" id="3M89"/>
    </source>
</evidence>
<evidence type="ECO:0007744" key="26">
    <source>
        <dbReference type="PDB" id="3M8K"/>
    </source>
</evidence>
<evidence type="ECO:0007829" key="27">
    <source>
        <dbReference type="PDB" id="2XKA"/>
    </source>
</evidence>
<evidence type="ECO:0007829" key="28">
    <source>
        <dbReference type="PDB" id="2XKB"/>
    </source>
</evidence>
<evidence type="ECO:0007829" key="29">
    <source>
        <dbReference type="PDB" id="3M89"/>
    </source>
</evidence>
<evidence type="ECO:0007829" key="30">
    <source>
        <dbReference type="PDB" id="3M8K"/>
    </source>
</evidence>
<proteinExistence type="evidence at protein level"/>
<name>TUBZ_BACTI</name>
<feature type="chain" id="PRO_0000448563" description="Tubulin-like protein TubZ">
    <location>
        <begin position="1"/>
        <end position="484"/>
    </location>
</feature>
<feature type="region of interest" description="Required to bind TubR-DNA complex" evidence="7">
    <location>
        <begin position="408"/>
        <end position="484"/>
    </location>
</feature>
<feature type="region of interest" description="Disordered" evidence="2">
    <location>
        <begin position="428"/>
        <end position="484"/>
    </location>
</feature>
<feature type="compositionally biased region" description="Polar residues" evidence="2">
    <location>
        <begin position="452"/>
        <end position="484"/>
    </location>
</feature>
<feature type="binding site" evidence="7 8 21 22 25">
    <location>
        <begin position="32"/>
        <end position="33"/>
    </location>
    <ligand>
        <name>GTP</name>
        <dbReference type="ChEBI" id="CHEBI:37565"/>
    </ligand>
</feature>
<feature type="binding site" evidence="8 22">
    <location>
        <position position="64"/>
    </location>
    <ligand>
        <name>Mg(2+)</name>
        <dbReference type="ChEBI" id="CHEBI:18420"/>
    </ligand>
</feature>
<feature type="binding site" evidence="7 8 21 22 25">
    <location>
        <begin position="140"/>
        <end position="142"/>
    </location>
    <ligand>
        <name>GTP</name>
        <dbReference type="ChEBI" id="CHEBI:37565"/>
    </ligand>
</feature>
<feature type="binding site" evidence="7 8 21 22 25">
    <location>
        <position position="213"/>
    </location>
    <ligand>
        <name>GTP</name>
        <dbReference type="ChEBI" id="CHEBI:37565"/>
    </ligand>
</feature>
<feature type="binding site" evidence="7 25">
    <location>
        <position position="237"/>
    </location>
    <ligand>
        <name>GTP</name>
        <dbReference type="ChEBI" id="CHEBI:37565"/>
    </ligand>
</feature>
<feature type="binding site" evidence="7 8 21 22 25">
    <location>
        <position position="241"/>
    </location>
    <ligand>
        <name>GTP</name>
        <dbReference type="ChEBI" id="CHEBI:37565"/>
    </ligand>
</feature>
<feature type="mutagenesis site" description="No polymerization in the presence of GTP, forms 2-stranded filaments in the presence of GTP-gamma-S; destabilizes the 4-stranded filament but should not affect GTP hydrolysis." evidence="10">
    <original>KGTKDLK</original>
    <variation>AGTADLA</variation>
    <location>
        <begin position="224"/>
        <end position="230"/>
    </location>
</feature>
<feature type="mutagenesis site" description="Lower critical concentration value, filaments are deficient in disassembly, pBtoxis is very unstable, assembles with wild-type TubZ subunits; probably has no GTPase activity. Only forms thin, 2 stranded filaments." evidence="4 10">
    <original>D</original>
    <variation>A</variation>
    <location>
        <position position="269"/>
    </location>
</feature>
<feature type="mutagenesis site" description="No longer binds TubR-DNA complex, protein still forms filaments in vitro." evidence="7">
    <location>
        <begin position="408"/>
        <end position="484"/>
    </location>
</feature>
<feature type="mutagenesis site" description="Very poor polymerization in the presence of GTP or GTP-gamma-S." evidence="10">
    <location>
        <begin position="471"/>
        <end position="484"/>
    </location>
</feature>
<feature type="helix" evidence="29">
    <location>
        <begin position="6"/>
        <end position="14"/>
    </location>
</feature>
<feature type="strand" evidence="29">
    <location>
        <begin position="25"/>
        <end position="30"/>
    </location>
</feature>
<feature type="helix" evidence="29">
    <location>
        <begin position="31"/>
        <end position="41"/>
    </location>
</feature>
<feature type="strand" evidence="30">
    <location>
        <begin position="47"/>
        <end position="49"/>
    </location>
</feature>
<feature type="strand" evidence="27">
    <location>
        <begin position="51"/>
        <end position="53"/>
    </location>
</feature>
<feature type="strand" evidence="29">
    <location>
        <begin position="55"/>
        <end position="61"/>
    </location>
</feature>
<feature type="helix" evidence="29">
    <location>
        <begin position="62"/>
        <end position="65"/>
    </location>
</feature>
<feature type="strand" evidence="29">
    <location>
        <begin position="69"/>
        <end position="71"/>
    </location>
</feature>
<feature type="helix" evidence="29">
    <location>
        <begin position="73"/>
        <end position="75"/>
    </location>
</feature>
<feature type="strand" evidence="29">
    <location>
        <begin position="76"/>
        <end position="78"/>
    </location>
</feature>
<feature type="helix" evidence="29">
    <location>
        <begin position="92"/>
        <end position="96"/>
    </location>
</feature>
<feature type="strand" evidence="29">
    <location>
        <begin position="97"/>
        <end position="101"/>
    </location>
</feature>
<feature type="helix" evidence="29">
    <location>
        <begin position="104"/>
        <end position="118"/>
    </location>
</feature>
<feature type="strand" evidence="27">
    <location>
        <begin position="122"/>
        <end position="124"/>
    </location>
</feature>
<feature type="strand" evidence="29">
    <location>
        <begin position="129"/>
        <end position="136"/>
    </location>
</feature>
<feature type="helix" evidence="29">
    <location>
        <begin position="140"/>
        <end position="154"/>
    </location>
</feature>
<feature type="strand" evidence="29">
    <location>
        <begin position="158"/>
        <end position="160"/>
    </location>
</feature>
<feature type="strand" evidence="29">
    <location>
        <begin position="162"/>
        <end position="168"/>
    </location>
</feature>
<feature type="helix" evidence="29">
    <location>
        <begin position="173"/>
        <end position="196"/>
    </location>
</feature>
<feature type="strand" evidence="27">
    <location>
        <begin position="199"/>
        <end position="201"/>
    </location>
</feature>
<feature type="strand" evidence="29">
    <location>
        <begin position="204"/>
        <end position="212"/>
    </location>
</feature>
<feature type="helix" evidence="29">
    <location>
        <begin position="213"/>
        <end position="222"/>
    </location>
</feature>
<feature type="strand" evidence="29">
    <location>
        <begin position="226"/>
        <end position="228"/>
    </location>
</feature>
<feature type="helix" evidence="29">
    <location>
        <begin position="236"/>
        <end position="257"/>
    </location>
</feature>
<feature type="strand" evidence="29">
    <location>
        <begin position="261"/>
        <end position="263"/>
    </location>
</feature>
<feature type="helix" evidence="29">
    <location>
        <begin position="267"/>
        <end position="275"/>
    </location>
</feature>
<feature type="strand" evidence="29">
    <location>
        <begin position="279"/>
        <end position="288"/>
    </location>
</feature>
<feature type="helix" evidence="29">
    <location>
        <begin position="293"/>
        <end position="305"/>
    </location>
</feature>
<feature type="helix" evidence="29">
    <location>
        <begin position="315"/>
        <end position="317"/>
    </location>
</feature>
<feature type="strand" evidence="29">
    <location>
        <begin position="320"/>
        <end position="330"/>
    </location>
</feature>
<feature type="helix" evidence="29">
    <location>
        <begin position="332"/>
        <end position="335"/>
    </location>
</feature>
<feature type="helix" evidence="29">
    <location>
        <begin position="337"/>
        <end position="347"/>
    </location>
</feature>
<feature type="turn" evidence="29">
    <location>
        <begin position="348"/>
        <end position="350"/>
    </location>
</feature>
<feature type="helix" evidence="29">
    <location>
        <begin position="353"/>
        <end position="355"/>
    </location>
</feature>
<feature type="strand" evidence="29">
    <location>
        <begin position="356"/>
        <end position="361"/>
    </location>
</feature>
<feature type="strand" evidence="29">
    <location>
        <begin position="364"/>
        <end position="379"/>
    </location>
</feature>
<feature type="helix" evidence="29">
    <location>
        <begin position="384"/>
        <end position="400"/>
    </location>
</feature>
<feature type="strand" evidence="28">
    <location>
        <begin position="409"/>
        <end position="412"/>
    </location>
</feature>
<feature type="helix" evidence="27">
    <location>
        <begin position="415"/>
        <end position="418"/>
    </location>
</feature>
<dbReference type="EC" id="3.6.5.-" evidence="5 6"/>
<dbReference type="EMBL" id="AL731825">
    <property type="protein sequence ID" value="CAD30186.1"/>
    <property type="molecule type" value="Genomic_DNA"/>
</dbReference>
<dbReference type="EMBL" id="CP013279">
    <property type="protein sequence ID" value="AND28646.1"/>
    <property type="molecule type" value="Genomic_DNA"/>
</dbReference>
<dbReference type="EMBL" id="KY352353">
    <property type="protein sequence ID" value="ASO64580.1"/>
    <property type="molecule type" value="Genomic_DNA"/>
</dbReference>
<dbReference type="RefSeq" id="WP_000926085.1">
    <property type="nucleotide sequence ID" value="NZ_VEIF01000064.1"/>
</dbReference>
<dbReference type="RefSeq" id="YP_001573870.1">
    <property type="nucleotide sequence ID" value="NC_010076.1"/>
</dbReference>
<dbReference type="PDB" id="2XKA">
    <property type="method" value="X-ray"/>
    <property type="resolution" value="3.00 A"/>
    <property type="chains" value="A/B/C/D/E/F/G=1-421"/>
</dbReference>
<dbReference type="PDB" id="2XKB">
    <property type="method" value="X-ray"/>
    <property type="resolution" value="3.00 A"/>
    <property type="chains" value="A/B/C/D/E/F/G/H/I/J/K/L=1-421"/>
</dbReference>
<dbReference type="PDB" id="3J4S">
    <property type="method" value="EM"/>
    <property type="resolution" value="6.80 A"/>
    <property type="chains" value="A=1-484"/>
</dbReference>
<dbReference type="PDB" id="3J4T">
    <property type="method" value="EM"/>
    <property type="resolution" value="10.80 A"/>
    <property type="chains" value="F=1-484"/>
</dbReference>
<dbReference type="PDB" id="3M89">
    <property type="method" value="X-ray"/>
    <property type="resolution" value="2.00 A"/>
    <property type="chains" value="A=1-407"/>
</dbReference>
<dbReference type="PDB" id="3M8K">
    <property type="method" value="X-ray"/>
    <property type="resolution" value="2.30 A"/>
    <property type="chains" value="A=1-428"/>
</dbReference>
<dbReference type="PDBsum" id="2XKA"/>
<dbReference type="PDBsum" id="2XKB"/>
<dbReference type="PDBsum" id="3J4S"/>
<dbReference type="PDBsum" id="3J4T"/>
<dbReference type="PDBsum" id="3M89"/>
<dbReference type="PDBsum" id="3M8K"/>
<dbReference type="EMDB" id="EMD-5762"/>
<dbReference type="EMDB" id="EMD-5763"/>
<dbReference type="SMR" id="Q8KNP3"/>
<dbReference type="DIP" id="DIP-59348N"/>
<dbReference type="IntAct" id="Q8KNP3">
    <property type="interactions" value="1"/>
</dbReference>
<dbReference type="EvolutionaryTrace" id="Q8KNP3"/>
<dbReference type="GO" id="GO:0005737">
    <property type="term" value="C:cytoplasm"/>
    <property type="evidence" value="ECO:0007669"/>
    <property type="project" value="UniProtKB-SubCell"/>
</dbReference>
<dbReference type="GO" id="GO:0005525">
    <property type="term" value="F:GTP binding"/>
    <property type="evidence" value="ECO:0007669"/>
    <property type="project" value="UniProtKB-KW"/>
</dbReference>
<dbReference type="GO" id="GO:0003924">
    <property type="term" value="F:GTPase activity"/>
    <property type="evidence" value="ECO:0007669"/>
    <property type="project" value="RHEA"/>
</dbReference>
<dbReference type="GO" id="GO:0042802">
    <property type="term" value="F:identical protein binding"/>
    <property type="evidence" value="ECO:0000353"/>
    <property type="project" value="IntAct"/>
</dbReference>
<dbReference type="GO" id="GO:0046872">
    <property type="term" value="F:metal ion binding"/>
    <property type="evidence" value="ECO:0007669"/>
    <property type="project" value="UniProtKB-KW"/>
</dbReference>
<dbReference type="GO" id="GO:0030541">
    <property type="term" value="P:plasmid partitioning"/>
    <property type="evidence" value="ECO:0007669"/>
    <property type="project" value="UniProtKB-KW"/>
</dbReference>
<dbReference type="Gene3D" id="3.40.50.1440">
    <property type="entry name" value="Tubulin/FtsZ, GTPase domain"/>
    <property type="match status" value="1"/>
</dbReference>
<dbReference type="InterPro" id="IPR036525">
    <property type="entry name" value="Tubulin/FtsZ_GTPase_sf"/>
</dbReference>
<dbReference type="InterPro" id="IPR054719">
    <property type="entry name" value="TubZ-like_C"/>
</dbReference>
<dbReference type="Pfam" id="PF22453">
    <property type="entry name" value="TubZ-like_C"/>
    <property type="match status" value="1"/>
</dbReference>
<dbReference type="SUPFAM" id="SSF52490">
    <property type="entry name" value="Tubulin nucleotide-binding domain-like"/>
    <property type="match status" value="1"/>
</dbReference>